<sequence length="227" mass="25738">MIVVVDDRDMVTEGYSSWFGREGITTTGFTPTDFDEWVESVPEQDIMAIEAFLIGECADQHRLPARIRERCKAPVIAVNDRPSLEHTLELFQSGVDDVVRKPVHVREILARINAIRRRAGASATSGADGTQLGPIRVFSDGRDPQINGIDFPLPRRERRILEYLIANRGRRLNKVQIFSAIYGIFDSEVEENVVESHISKLRKKLRGQLGFDPIDSKRFLGYCINIE</sequence>
<proteinExistence type="inferred from homology"/>
<protein>
    <recommendedName>
        <fullName>Flagellar transcriptional regulator FtcR</fullName>
    </recommendedName>
</protein>
<gene>
    <name type="primary">ftcR</name>
    <name type="ordered locus">BRA1140</name>
    <name type="ordered locus">BS1330_II1131</name>
</gene>
<keyword id="KW-0238">DNA-binding</keyword>
<keyword id="KW-0804">Transcription</keyword>
<keyword id="KW-0805">Transcription regulation</keyword>
<accession>Q8FUS8</accession>
<accession>G0KED8</accession>
<dbReference type="EMBL" id="AE014292">
    <property type="protein sequence ID" value="AAN34300.1"/>
    <property type="molecule type" value="Genomic_DNA"/>
</dbReference>
<dbReference type="EMBL" id="CP002998">
    <property type="protein sequence ID" value="AEM20576.1"/>
    <property type="molecule type" value="Genomic_DNA"/>
</dbReference>
<dbReference type="PIR" id="AD3529">
    <property type="entry name" value="AD3529"/>
</dbReference>
<dbReference type="RefSeq" id="WP_002966643.1">
    <property type="nucleotide sequence ID" value="NZ_KN046805.1"/>
</dbReference>
<dbReference type="SMR" id="Q8FUS8"/>
<dbReference type="KEGG" id="bms:BRA1140"/>
<dbReference type="KEGG" id="bsi:BS1330_II1131"/>
<dbReference type="PATRIC" id="fig|204722.21.peg.221"/>
<dbReference type="HOGENOM" id="CLU_1064703_0_0_5"/>
<dbReference type="PhylomeDB" id="Q8FUS8"/>
<dbReference type="PRO" id="PR:Q8FUS8"/>
<dbReference type="Proteomes" id="UP000007104">
    <property type="component" value="Chromosome II"/>
</dbReference>
<dbReference type="GO" id="GO:0005829">
    <property type="term" value="C:cytosol"/>
    <property type="evidence" value="ECO:0007669"/>
    <property type="project" value="TreeGrafter"/>
</dbReference>
<dbReference type="GO" id="GO:0032993">
    <property type="term" value="C:protein-DNA complex"/>
    <property type="evidence" value="ECO:0007669"/>
    <property type="project" value="TreeGrafter"/>
</dbReference>
<dbReference type="GO" id="GO:0000156">
    <property type="term" value="F:phosphorelay response regulator activity"/>
    <property type="evidence" value="ECO:0007669"/>
    <property type="project" value="TreeGrafter"/>
</dbReference>
<dbReference type="GO" id="GO:0000976">
    <property type="term" value="F:transcription cis-regulatory region binding"/>
    <property type="evidence" value="ECO:0007669"/>
    <property type="project" value="TreeGrafter"/>
</dbReference>
<dbReference type="GO" id="GO:0006355">
    <property type="term" value="P:regulation of DNA-templated transcription"/>
    <property type="evidence" value="ECO:0007669"/>
    <property type="project" value="InterPro"/>
</dbReference>
<dbReference type="CDD" id="cd00383">
    <property type="entry name" value="trans_reg_C"/>
    <property type="match status" value="1"/>
</dbReference>
<dbReference type="Gene3D" id="3.40.50.2300">
    <property type="match status" value="1"/>
</dbReference>
<dbReference type="Gene3D" id="1.10.10.10">
    <property type="entry name" value="Winged helix-like DNA-binding domain superfamily/Winged helix DNA-binding domain"/>
    <property type="match status" value="1"/>
</dbReference>
<dbReference type="InterPro" id="IPR011006">
    <property type="entry name" value="CheY-like_superfamily"/>
</dbReference>
<dbReference type="InterPro" id="IPR001867">
    <property type="entry name" value="OmpR/PhoB-type_DNA-bd"/>
</dbReference>
<dbReference type="InterPro" id="IPR016032">
    <property type="entry name" value="Sig_transdc_resp-reg_C-effctor"/>
</dbReference>
<dbReference type="InterPro" id="IPR001789">
    <property type="entry name" value="Sig_transdc_resp-reg_receiver"/>
</dbReference>
<dbReference type="InterPro" id="IPR039420">
    <property type="entry name" value="WalR-like"/>
</dbReference>
<dbReference type="InterPro" id="IPR036388">
    <property type="entry name" value="WH-like_DNA-bd_sf"/>
</dbReference>
<dbReference type="PANTHER" id="PTHR48111">
    <property type="entry name" value="REGULATOR OF RPOS"/>
    <property type="match status" value="1"/>
</dbReference>
<dbReference type="PANTHER" id="PTHR48111:SF67">
    <property type="entry name" value="TRANSCRIPTIONAL REGULATORY PROTEIN TCTD"/>
    <property type="match status" value="1"/>
</dbReference>
<dbReference type="Pfam" id="PF00486">
    <property type="entry name" value="Trans_reg_C"/>
    <property type="match status" value="1"/>
</dbReference>
<dbReference type="SMART" id="SM00862">
    <property type="entry name" value="Trans_reg_C"/>
    <property type="match status" value="1"/>
</dbReference>
<dbReference type="SUPFAM" id="SSF46894">
    <property type="entry name" value="C-terminal effector domain of the bipartite response regulators"/>
    <property type="match status" value="1"/>
</dbReference>
<dbReference type="SUPFAM" id="SSF52172">
    <property type="entry name" value="CheY-like"/>
    <property type="match status" value="1"/>
</dbReference>
<dbReference type="PROSITE" id="PS51755">
    <property type="entry name" value="OMPR_PHOB"/>
    <property type="match status" value="1"/>
</dbReference>
<dbReference type="PROSITE" id="PS50110">
    <property type="entry name" value="RESPONSE_REGULATORY"/>
    <property type="match status" value="1"/>
</dbReference>
<reference key="1">
    <citation type="journal article" date="2002" name="Proc. Natl. Acad. Sci. U.S.A.">
        <title>The Brucella suis genome reveals fundamental similarities between animal and plant pathogens and symbionts.</title>
        <authorList>
            <person name="Paulsen I.T."/>
            <person name="Seshadri R."/>
            <person name="Nelson K.E."/>
            <person name="Eisen J.A."/>
            <person name="Heidelberg J.F."/>
            <person name="Read T.D."/>
            <person name="Dodson R.J."/>
            <person name="Umayam L.A."/>
            <person name="Brinkac L.M."/>
            <person name="Beanan M.J."/>
            <person name="Daugherty S.C."/>
            <person name="DeBoy R.T."/>
            <person name="Durkin A.S."/>
            <person name="Kolonay J.F."/>
            <person name="Madupu R."/>
            <person name="Nelson W.C."/>
            <person name="Ayodeji B."/>
            <person name="Kraul M."/>
            <person name="Shetty J."/>
            <person name="Malek J.A."/>
            <person name="Van Aken S.E."/>
            <person name="Riedmuller S."/>
            <person name="Tettelin H."/>
            <person name="Gill S.R."/>
            <person name="White O."/>
            <person name="Salzberg S.L."/>
            <person name="Hoover D.L."/>
            <person name="Lindler L.E."/>
            <person name="Halling S.M."/>
            <person name="Boyle S.M."/>
            <person name="Fraser C.M."/>
        </authorList>
    </citation>
    <scope>NUCLEOTIDE SEQUENCE [LARGE SCALE GENOMIC DNA]</scope>
    <source>
        <strain>1330</strain>
    </source>
</reference>
<reference key="2">
    <citation type="journal article" date="2011" name="J. Bacteriol.">
        <title>Revised genome sequence of Brucella suis 1330.</title>
        <authorList>
            <person name="Tae H."/>
            <person name="Shallom S."/>
            <person name="Settlage R."/>
            <person name="Preston D."/>
            <person name="Adams L.G."/>
            <person name="Garner H.R."/>
        </authorList>
    </citation>
    <scope>NUCLEOTIDE SEQUENCE [LARGE SCALE GENOMIC DNA]</scope>
    <source>
        <strain>1330</strain>
    </source>
</reference>
<name>FTCR_BRUSU</name>
<evidence type="ECO:0000250" key="1"/>
<evidence type="ECO:0000255" key="2">
    <source>
        <dbReference type="PROSITE-ProRule" id="PRU00169"/>
    </source>
</evidence>
<evidence type="ECO:0000255" key="3">
    <source>
        <dbReference type="PROSITE-ProRule" id="PRU01091"/>
    </source>
</evidence>
<evidence type="ECO:0000305" key="4"/>
<feature type="chain" id="PRO_0000319616" description="Flagellar transcriptional regulator FtcR">
    <location>
        <begin position="1"/>
        <end position="227"/>
    </location>
</feature>
<feature type="domain" description="Response regulatory" evidence="2">
    <location>
        <begin position="1"/>
        <end position="116"/>
    </location>
</feature>
<feature type="DNA-binding region" description="OmpR/PhoB-type" evidence="3">
    <location>
        <begin position="127"/>
        <end position="226"/>
    </location>
</feature>
<comment type="function">
    <text evidence="1">Required for transcription of flagellar genes.</text>
</comment>
<comment type="miscellaneous">
    <text>There is no cognate histidine kinase partner identified so far for FtcR.</text>
</comment>
<comment type="caution">
    <text evidence="4">Lacks the conserved Asp residue in position 50 usually required for phosphorylation.</text>
</comment>
<organism>
    <name type="scientific">Brucella suis biovar 1 (strain 1330)</name>
    <dbReference type="NCBI Taxonomy" id="204722"/>
    <lineage>
        <taxon>Bacteria</taxon>
        <taxon>Pseudomonadati</taxon>
        <taxon>Pseudomonadota</taxon>
        <taxon>Alphaproteobacteria</taxon>
        <taxon>Hyphomicrobiales</taxon>
        <taxon>Brucellaceae</taxon>
        <taxon>Brucella/Ochrobactrum group</taxon>
        <taxon>Brucella</taxon>
    </lineage>
</organism>